<accession>Q81AZ5</accession>
<organism>
    <name type="scientific">Bacillus cereus (strain ATCC 14579 / DSM 31 / CCUG 7414 / JCM 2152 / NBRC 15305 / NCIMB 9373 / NCTC 2599 / NRRL B-3711)</name>
    <dbReference type="NCBI Taxonomy" id="226900"/>
    <lineage>
        <taxon>Bacteria</taxon>
        <taxon>Bacillati</taxon>
        <taxon>Bacillota</taxon>
        <taxon>Bacilli</taxon>
        <taxon>Bacillales</taxon>
        <taxon>Bacillaceae</taxon>
        <taxon>Bacillus</taxon>
        <taxon>Bacillus cereus group</taxon>
    </lineage>
</organism>
<gene>
    <name evidence="1" type="primary">spx2</name>
    <name type="ordered locus">BC_3402</name>
</gene>
<keyword id="KW-0963">Cytoplasm</keyword>
<keyword id="KW-1015">Disulfide bond</keyword>
<keyword id="KW-0676">Redox-active center</keyword>
<keyword id="KW-1185">Reference proteome</keyword>
<keyword id="KW-0804">Transcription</keyword>
<keyword id="KW-0805">Transcription regulation</keyword>
<protein>
    <recommendedName>
        <fullName evidence="1">Global transcriptional regulator Spx 2</fullName>
    </recommendedName>
</protein>
<evidence type="ECO:0000255" key="1">
    <source>
        <dbReference type="HAMAP-Rule" id="MF_01132"/>
    </source>
</evidence>
<proteinExistence type="inferred from homology"/>
<comment type="function">
    <text evidence="1">Global transcriptional regulator that plays a key role in stress response and exerts either positive or negative regulation of genes. Acts by interacting with the C-terminal domain of the alpha subunit of the RNA polymerase (RNAP). This interaction can enhance binding of RNAP to the promoter region of target genes and stimulate their transcription, or block interaction of RNAP with activator.</text>
</comment>
<comment type="subunit">
    <text evidence="1">Interacts with the C-terminal domain of the alpha subunit of the RNAP.</text>
</comment>
<comment type="subcellular location">
    <subcellularLocation>
        <location evidence="1">Cytoplasm</location>
    </subcellularLocation>
</comment>
<comment type="similarity">
    <text evidence="1">Belongs to the ArsC family. Spx subfamily.</text>
</comment>
<dbReference type="EMBL" id="AE016877">
    <property type="protein sequence ID" value="AAP10338.1"/>
    <property type="molecule type" value="Genomic_DNA"/>
</dbReference>
<dbReference type="RefSeq" id="NP_833137.1">
    <property type="nucleotide sequence ID" value="NC_004722.1"/>
</dbReference>
<dbReference type="SMR" id="Q81AZ5"/>
<dbReference type="STRING" id="226900.BC_3402"/>
<dbReference type="KEGG" id="bce:BC3402"/>
<dbReference type="PATRIC" id="fig|226900.8.peg.3488"/>
<dbReference type="HOGENOM" id="CLU_116644_1_1_9"/>
<dbReference type="OrthoDB" id="9794155at2"/>
<dbReference type="Proteomes" id="UP000001417">
    <property type="component" value="Chromosome"/>
</dbReference>
<dbReference type="GO" id="GO:0005737">
    <property type="term" value="C:cytoplasm"/>
    <property type="evidence" value="ECO:0007669"/>
    <property type="project" value="UniProtKB-SubCell"/>
</dbReference>
<dbReference type="GO" id="GO:0045892">
    <property type="term" value="P:negative regulation of DNA-templated transcription"/>
    <property type="evidence" value="ECO:0007669"/>
    <property type="project" value="InterPro"/>
</dbReference>
<dbReference type="CDD" id="cd03032">
    <property type="entry name" value="ArsC_Spx"/>
    <property type="match status" value="1"/>
</dbReference>
<dbReference type="Gene3D" id="3.40.30.10">
    <property type="entry name" value="Glutaredoxin"/>
    <property type="match status" value="1"/>
</dbReference>
<dbReference type="HAMAP" id="MF_01132">
    <property type="entry name" value="Spx"/>
    <property type="match status" value="1"/>
</dbReference>
<dbReference type="InterPro" id="IPR006660">
    <property type="entry name" value="Arsenate_reductase-like"/>
</dbReference>
<dbReference type="InterPro" id="IPR023731">
    <property type="entry name" value="Spx"/>
</dbReference>
<dbReference type="InterPro" id="IPR036249">
    <property type="entry name" value="Thioredoxin-like_sf"/>
</dbReference>
<dbReference type="InterPro" id="IPR006504">
    <property type="entry name" value="Tscrpt_reg_Spx/MgsR"/>
</dbReference>
<dbReference type="NCBIfam" id="TIGR01617">
    <property type="entry name" value="arsC_related"/>
    <property type="match status" value="1"/>
</dbReference>
<dbReference type="NCBIfam" id="NF002459">
    <property type="entry name" value="PRK01655.1"/>
    <property type="match status" value="1"/>
</dbReference>
<dbReference type="NCBIfam" id="NF009210">
    <property type="entry name" value="PRK12559.1"/>
    <property type="match status" value="1"/>
</dbReference>
<dbReference type="PANTHER" id="PTHR30041">
    <property type="entry name" value="ARSENATE REDUCTASE"/>
    <property type="match status" value="1"/>
</dbReference>
<dbReference type="PANTHER" id="PTHR30041:SF7">
    <property type="entry name" value="GLOBAL TRANSCRIPTIONAL REGULATOR SPX"/>
    <property type="match status" value="1"/>
</dbReference>
<dbReference type="Pfam" id="PF03960">
    <property type="entry name" value="ArsC"/>
    <property type="match status" value="1"/>
</dbReference>
<dbReference type="SUPFAM" id="SSF52833">
    <property type="entry name" value="Thioredoxin-like"/>
    <property type="match status" value="1"/>
</dbReference>
<dbReference type="PROSITE" id="PS51353">
    <property type="entry name" value="ARSC"/>
    <property type="match status" value="1"/>
</dbReference>
<reference key="1">
    <citation type="journal article" date="2003" name="Nature">
        <title>Genome sequence of Bacillus cereus and comparative analysis with Bacillus anthracis.</title>
        <authorList>
            <person name="Ivanova N."/>
            <person name="Sorokin A."/>
            <person name="Anderson I."/>
            <person name="Galleron N."/>
            <person name="Candelon B."/>
            <person name="Kapatral V."/>
            <person name="Bhattacharyya A."/>
            <person name="Reznik G."/>
            <person name="Mikhailova N."/>
            <person name="Lapidus A."/>
            <person name="Chu L."/>
            <person name="Mazur M."/>
            <person name="Goltsman E."/>
            <person name="Larsen N."/>
            <person name="D'Souza M."/>
            <person name="Walunas T."/>
            <person name="Grechkin Y."/>
            <person name="Pusch G."/>
            <person name="Haselkorn R."/>
            <person name="Fonstein M."/>
            <person name="Ehrlich S.D."/>
            <person name="Overbeek R."/>
            <person name="Kyrpides N.C."/>
        </authorList>
    </citation>
    <scope>NUCLEOTIDE SEQUENCE [LARGE SCALE GENOMIC DNA]</scope>
    <source>
        <strain>ATCC 14579 / DSM 31 / CCUG 7414 / JCM 2152 / NBRC 15305 / NCIMB 9373 / NCTC 2599 / NRRL B-3711</strain>
    </source>
</reference>
<name>SPX2_BACCR</name>
<feature type="chain" id="PRO_0000162548" description="Global transcriptional regulator Spx 2">
    <location>
        <begin position="1"/>
        <end position="131"/>
    </location>
</feature>
<feature type="disulfide bond" description="Redox-active" evidence="1">
    <location>
        <begin position="10"/>
        <end position="13"/>
    </location>
</feature>
<sequence length="131" mass="15347">MVILYTTASCASCRKAKAWLEEHQIDYIEKNIVSNSMTVDELKSILRLTEEGATEIISTRSKTFQDLNINIDELSLNEFYTLIIEHPLMLRRPIMLDEKRLQIGFNEEEIRKFLPRSVRTFLNIELQKLAN</sequence>